<organism>
    <name type="scientific">Klebsiella pneumoniae</name>
    <dbReference type="NCBI Taxonomy" id="573"/>
    <lineage>
        <taxon>Bacteria</taxon>
        <taxon>Pseudomonadati</taxon>
        <taxon>Pseudomonadota</taxon>
        <taxon>Gammaproteobacteria</taxon>
        <taxon>Enterobacterales</taxon>
        <taxon>Enterobacteriaceae</taxon>
        <taxon>Klebsiella/Raoultella group</taxon>
        <taxon>Klebsiella</taxon>
        <taxon>Klebsiella pneumoniae complex</taxon>
    </lineage>
</organism>
<evidence type="ECO:0000255" key="1"/>
<evidence type="ECO:0000255" key="2">
    <source>
        <dbReference type="PROSITE-ProRule" id="PRU00107"/>
    </source>
</evidence>
<evidence type="ECO:0000269" key="3">
    <source>
    </source>
</evidence>
<evidence type="ECO:0000269" key="4">
    <source>
    </source>
</evidence>
<evidence type="ECO:0000269" key="5">
    <source>
    </source>
</evidence>
<evidence type="ECO:0000305" key="6"/>
<evidence type="ECO:0007829" key="7">
    <source>
        <dbReference type="PDB" id="1P0Z"/>
    </source>
</evidence>
<evidence type="ECO:0007829" key="8">
    <source>
        <dbReference type="PDB" id="2J80"/>
    </source>
</evidence>
<evidence type="ECO:0007829" key="9">
    <source>
        <dbReference type="PDB" id="2V9A"/>
    </source>
</evidence>
<evidence type="ECO:0007829" key="10">
    <source>
        <dbReference type="PDB" id="6LNP"/>
    </source>
</evidence>
<feature type="chain" id="PRO_0000074733" description="Sensor histidine kinase CitA">
    <location>
        <begin position="1"/>
        <end position="547"/>
    </location>
</feature>
<feature type="topological domain" description="Cytoplasmic" evidence="1">
    <location>
        <begin position="1"/>
        <end position="23"/>
    </location>
</feature>
<feature type="transmembrane region" description="Helical" evidence="1">
    <location>
        <begin position="24"/>
        <end position="44"/>
    </location>
</feature>
<feature type="topological domain" description="Periplasmic">
    <location>
        <begin position="45"/>
        <end position="180"/>
    </location>
</feature>
<feature type="transmembrane region" description="Helical" evidence="1">
    <location>
        <begin position="181"/>
        <end position="201"/>
    </location>
</feature>
<feature type="topological domain" description="Cytoplasmic" evidence="1">
    <location>
        <begin position="202"/>
        <end position="547"/>
    </location>
</feature>
<feature type="domain" description="PAS">
    <location>
        <begin position="225"/>
        <end position="264"/>
    </location>
</feature>
<feature type="domain" description="Histidine kinase" evidence="2">
    <location>
        <begin position="347"/>
        <end position="542"/>
    </location>
</feature>
<feature type="binding site" evidence="5">
    <location>
        <position position="109"/>
    </location>
    <ligand>
        <name>citrate</name>
        <dbReference type="ChEBI" id="CHEBI:16947"/>
    </ligand>
</feature>
<feature type="binding site" evidence="5">
    <location>
        <position position="112"/>
    </location>
    <ligand>
        <name>citrate</name>
        <dbReference type="ChEBI" id="CHEBI:16947"/>
    </ligand>
</feature>
<feature type="binding site" evidence="5">
    <location>
        <position position="150"/>
    </location>
    <ligand>
        <name>citrate</name>
        <dbReference type="ChEBI" id="CHEBI:16947"/>
    </ligand>
</feature>
<feature type="binding site" evidence="5">
    <location>
        <position position="152"/>
    </location>
    <ligand>
        <name>citrate</name>
        <dbReference type="ChEBI" id="CHEBI:16947"/>
    </ligand>
</feature>
<feature type="modified residue" description="Phosphohistidine; by autocatalysis" evidence="6">
    <location>
        <position position="350"/>
    </location>
</feature>
<feature type="mutagenesis site" description="Strongly reduces citrate binding." evidence="4">
    <original>R</original>
    <variation>A</variation>
    <location>
        <position position="109"/>
    </location>
</feature>
<feature type="mutagenesis site" description="Strongly reduces citrate binding." evidence="4">
    <original>H</original>
    <variation>A</variation>
    <location>
        <position position="112"/>
    </location>
</feature>
<feature type="mutagenesis site" description="Increases citrate binding." evidence="4">
    <original>R</original>
    <variation>A</variation>
    <location>
        <position position="141"/>
    </location>
</feature>
<feature type="mutagenesis site" description="Reduces citrate binding." evidence="4">
    <original>R</original>
    <variation>A</variation>
    <location>
        <position position="150"/>
    </location>
</feature>
<feature type="mutagenesis site" description="Strongly reduces citrate binding." evidence="4">
    <original>K</original>
    <variation>A</variation>
    <location>
        <position position="152"/>
    </location>
</feature>
<feature type="mutagenesis site" description="Loss of autophosphorylation." evidence="3">
    <original>H</original>
    <variation>L</variation>
    <location>
        <position position="350"/>
    </location>
</feature>
<feature type="turn" evidence="9">
    <location>
        <begin position="49"/>
        <end position="51"/>
    </location>
</feature>
<feature type="helix" evidence="7">
    <location>
        <begin position="53"/>
        <end position="67"/>
    </location>
</feature>
<feature type="helix" evidence="7">
    <location>
        <begin position="70"/>
        <end position="77"/>
    </location>
</feature>
<feature type="helix" evidence="7">
    <location>
        <begin position="81"/>
        <end position="94"/>
    </location>
</feature>
<feature type="strand" evidence="7">
    <location>
        <begin position="98"/>
        <end position="104"/>
    </location>
</feature>
<feature type="strand" evidence="7">
    <location>
        <begin position="107"/>
        <end position="111"/>
    </location>
</feature>
<feature type="helix" evidence="7">
    <location>
        <begin position="115"/>
        <end position="117"/>
    </location>
</feature>
<feature type="strand" evidence="8">
    <location>
        <begin position="123"/>
        <end position="125"/>
    </location>
</feature>
<feature type="helix" evidence="7">
    <location>
        <begin position="128"/>
        <end position="133"/>
    </location>
</feature>
<feature type="strand" evidence="7">
    <location>
        <begin position="137"/>
        <end position="143"/>
    </location>
</feature>
<feature type="strand" evidence="7">
    <location>
        <begin position="146"/>
        <end position="156"/>
    </location>
</feature>
<feature type="strand" evidence="7">
    <location>
        <begin position="162"/>
        <end position="171"/>
    </location>
</feature>
<feature type="helix" evidence="7">
    <location>
        <begin position="172"/>
        <end position="174"/>
    </location>
</feature>
<feature type="strand" evidence="10">
    <location>
        <begin position="177"/>
        <end position="179"/>
    </location>
</feature>
<accession>P52687</accession>
<dbReference type="EC" id="2.7.13.3"/>
<dbReference type="EMBL" id="U31464">
    <property type="protein sequence ID" value="AAC44733.1"/>
    <property type="molecule type" value="Genomic_DNA"/>
</dbReference>
<dbReference type="PIR" id="S70538">
    <property type="entry name" value="S70538"/>
</dbReference>
<dbReference type="PDB" id="1P0Z">
    <property type="method" value="X-ray"/>
    <property type="resolution" value="1.60 A"/>
    <property type="chains" value="A/B/C/D/E/F/G/H/I/J=48-176"/>
</dbReference>
<dbReference type="PDB" id="2J80">
    <property type="method" value="X-ray"/>
    <property type="resolution" value="1.60 A"/>
    <property type="chains" value="A/B=45-176"/>
</dbReference>
<dbReference type="PDB" id="2V9A">
    <property type="method" value="X-ray"/>
    <property type="resolution" value="2.00 A"/>
    <property type="chains" value="A/B=45-176"/>
</dbReference>
<dbReference type="PDB" id="6LNP">
    <property type="method" value="X-ray"/>
    <property type="resolution" value="2.99 A"/>
    <property type="chains" value="B/D=47-179"/>
</dbReference>
<dbReference type="PDBsum" id="1P0Z"/>
<dbReference type="PDBsum" id="2J80"/>
<dbReference type="PDBsum" id="2V9A"/>
<dbReference type="PDBsum" id="6LNP"/>
<dbReference type="SMR" id="P52687"/>
<dbReference type="DrugBank" id="DB04494">
    <property type="generic name" value="Dihydroxy(oxo)molybdenum(6+)"/>
</dbReference>
<dbReference type="DrugBank" id="DB04414">
    <property type="generic name" value="Heptamolybdate"/>
</dbReference>
<dbReference type="BRENDA" id="2.7.13.3">
    <property type="organism ID" value="2814"/>
</dbReference>
<dbReference type="EvolutionaryTrace" id="P52687"/>
<dbReference type="GO" id="GO:0005886">
    <property type="term" value="C:plasma membrane"/>
    <property type="evidence" value="ECO:0007669"/>
    <property type="project" value="UniProtKB-SubCell"/>
</dbReference>
<dbReference type="GO" id="GO:0005524">
    <property type="term" value="F:ATP binding"/>
    <property type="evidence" value="ECO:0007669"/>
    <property type="project" value="UniProtKB-KW"/>
</dbReference>
<dbReference type="GO" id="GO:0000155">
    <property type="term" value="F:phosphorelay sensor kinase activity"/>
    <property type="evidence" value="ECO:0007669"/>
    <property type="project" value="InterPro"/>
</dbReference>
<dbReference type="CDD" id="cd16915">
    <property type="entry name" value="HATPase_DpiB-CitA-like"/>
    <property type="match status" value="1"/>
</dbReference>
<dbReference type="CDD" id="cd00130">
    <property type="entry name" value="PAS"/>
    <property type="match status" value="1"/>
</dbReference>
<dbReference type="FunFam" id="3.30.450.20:FF:000018">
    <property type="entry name" value="Sensor histidine kinase DcuS"/>
    <property type="match status" value="1"/>
</dbReference>
<dbReference type="Gene3D" id="3.30.565.10">
    <property type="entry name" value="Histidine kinase-like ATPase, C-terminal domain"/>
    <property type="match status" value="1"/>
</dbReference>
<dbReference type="Gene3D" id="3.30.450.20">
    <property type="entry name" value="PAS domain"/>
    <property type="match status" value="2"/>
</dbReference>
<dbReference type="InterPro" id="IPR036890">
    <property type="entry name" value="HATPase_C_sf"/>
</dbReference>
<dbReference type="InterPro" id="IPR005467">
    <property type="entry name" value="His_kinase_dom"/>
</dbReference>
<dbReference type="InterPro" id="IPR000014">
    <property type="entry name" value="PAS"/>
</dbReference>
<dbReference type="InterPro" id="IPR035965">
    <property type="entry name" value="PAS-like_dom_sf"/>
</dbReference>
<dbReference type="InterPro" id="IPR033463">
    <property type="entry name" value="sCache_3"/>
</dbReference>
<dbReference type="InterPro" id="IPR029151">
    <property type="entry name" value="Sensor-like_sf"/>
</dbReference>
<dbReference type="InterPro" id="IPR004358">
    <property type="entry name" value="Sig_transdc_His_kin-like_C"/>
</dbReference>
<dbReference type="InterPro" id="IPR016120">
    <property type="entry name" value="Sig_transdc_His_kin_SpoOB"/>
</dbReference>
<dbReference type="InterPro" id="IPR050428">
    <property type="entry name" value="TCS_sensor_his_kinase"/>
</dbReference>
<dbReference type="PANTHER" id="PTHR45436:SF5">
    <property type="entry name" value="SENSOR HISTIDINE KINASE TRCS"/>
    <property type="match status" value="1"/>
</dbReference>
<dbReference type="PANTHER" id="PTHR45436">
    <property type="entry name" value="SENSOR HISTIDINE KINASE YKOH"/>
    <property type="match status" value="1"/>
</dbReference>
<dbReference type="Pfam" id="PF02518">
    <property type="entry name" value="HATPase_c"/>
    <property type="match status" value="1"/>
</dbReference>
<dbReference type="Pfam" id="PF17203">
    <property type="entry name" value="sCache_3_2"/>
    <property type="match status" value="1"/>
</dbReference>
<dbReference type="PRINTS" id="PR00344">
    <property type="entry name" value="BCTRLSENSOR"/>
</dbReference>
<dbReference type="SMART" id="SM00387">
    <property type="entry name" value="HATPase_c"/>
    <property type="match status" value="1"/>
</dbReference>
<dbReference type="SUPFAM" id="SSF55874">
    <property type="entry name" value="ATPase domain of HSP90 chaperone/DNA topoisomerase II/histidine kinase"/>
    <property type="match status" value="1"/>
</dbReference>
<dbReference type="SUPFAM" id="SSF55785">
    <property type="entry name" value="PYP-like sensor domain (PAS domain)"/>
    <property type="match status" value="1"/>
</dbReference>
<dbReference type="SUPFAM" id="SSF103190">
    <property type="entry name" value="Sensory domain-like"/>
    <property type="match status" value="1"/>
</dbReference>
<dbReference type="SUPFAM" id="SSF55890">
    <property type="entry name" value="Sporulation response regulatory protein Spo0B"/>
    <property type="match status" value="1"/>
</dbReference>
<dbReference type="PROSITE" id="PS50109">
    <property type="entry name" value="HIS_KIN"/>
    <property type="match status" value="1"/>
</dbReference>
<comment type="function">
    <text evidence="3">Member of the two-component regulatory system CitA/CitB. Probably activates CitB by phosphorylation. The periplasmic domain binds H-citrate(2-), which is essential for induction of the citrate-fermentation genes.</text>
</comment>
<comment type="catalytic activity">
    <reaction evidence="3">
        <text>ATP + protein L-histidine = ADP + protein N-phospho-L-histidine.</text>
        <dbReference type="EC" id="2.7.13.3"/>
    </reaction>
</comment>
<comment type="subunit">
    <text evidence="5">Homodimer. In vitro CitB and the CitA kinase domain form a complex, formation of which is enhanced by ATP.</text>
</comment>
<comment type="subcellular location">
    <subcellularLocation>
        <location evidence="6">Cell inner membrane</location>
        <topology evidence="6">Multi-pass membrane protein</topology>
    </subcellularLocation>
</comment>
<comment type="PTM">
    <text>Autophosphorylated.</text>
</comment>
<reference key="1">
    <citation type="journal article" date="1995" name="Mol. Microbiol.">
        <title>Regulation of anaerobic citrate metabolism in Klebsiella pneumoniae.</title>
        <authorList>
            <person name="Bott M."/>
            <person name="Meyer M."/>
            <person name="Dimroth P."/>
        </authorList>
    </citation>
    <scope>NUCLEOTIDE SEQUENCE [GENOMIC DNA]</scope>
    <source>
        <strain>ATCC 13882 / NBRC 13541 / NCTC 8172</strain>
    </source>
</reference>
<reference key="2">
    <citation type="journal article" date="1999" name="Mol. Microbiol.">
        <title>The periplasmic domain of the histidine autokinase CitA functions as a highly specific citrate receptor.</title>
        <authorList>
            <person name="Kaspar S."/>
            <person name="Perozzo R."/>
            <person name="Reinelt S."/>
            <person name="Meyer M."/>
            <person name="Pfister K."/>
            <person name="Scapozza L."/>
            <person name="Bott M."/>
        </authorList>
    </citation>
    <scope>FUNCTION</scope>
    <scope>CITRATE-BINDING</scope>
    <scope>CATALYTIC ACTIVITY</scope>
    <scope>AUTOPHOSPHORYLATION</scope>
    <scope>CHARACTERIZATION</scope>
    <scope>MUTAGENESIS OF HIS-350</scope>
    <source>
        <strain>ATCC 13882 / NBRC 13541 / NCTC 8172</strain>
    </source>
</reference>
<reference key="3">
    <citation type="journal article" date="2003" name="Biochemistry">
        <title>Identification of basic amino acid residues important for citrate binding by the periplasmic receptor domain of the sensor kinase CitA.</title>
        <authorList>
            <person name="Gerharz T."/>
            <person name="Reinelt S."/>
            <person name="Kaspar S."/>
            <person name="Scapozza L."/>
            <person name="Bott M."/>
        </authorList>
    </citation>
    <scope>MUTAGENESIS OF ARG-109; HIS-112; ARG-141; ARG-150 AND LYS-152</scope>
</reference>
<reference key="4">
    <citation type="journal article" date="2003" name="J. Biol. Chem.">
        <title>The structure of the periplasmic ligand-binding domain of the sensor kinase CitA reveals the first extracellular PAS domain.</title>
        <authorList>
            <person name="Reinelt S."/>
            <person name="Hofmann E."/>
            <person name="Gerharz T."/>
            <person name="Bott M."/>
            <person name="Madden D.R."/>
        </authorList>
    </citation>
    <scope>X-RAY CRYSTALLOGRAPHY (1.6 ANGSTROMS) IN COMPLEX WITH CITRATE</scope>
</reference>
<proteinExistence type="evidence at protein level"/>
<protein>
    <recommendedName>
        <fullName>Sensor histidine kinase CitA</fullName>
        <ecNumber>2.7.13.3</ecNumber>
    </recommendedName>
</protein>
<gene>
    <name type="primary">citA</name>
</gene>
<sequence length="547" mass="61780">MSIYPMYTRKITHWFARRSFQNRIFLLILFTSTIVMLAMSWYLTDITEERLHYQVGQRALIQAMQISAMPELVEAVQKRDLARIKALIDPMRSFSDATYITVGDASGQRLYHVNPDEIGKSMEGGDSDEALINAKSYVSVRKGSLGSSLRGKSPIQDATGKVIGIVSVGYTIEQLENWLSLQISSLLIPMAIMLLLLLFCARRFSLHIKKQMLNMEPQQLSQLLIQQSVLFESVFEGLIAIDSDYKITAINQTARRLLNLSQPEPTLIGKRISSVISQEVFFYDAPQTNKKDEIVTFNQIKVIASRMAVILNNEPQGWVISFRSKDDINTLSLQLSQVQQYADNLRAVQHEHRNLISTIAGLLFLKRYNQALELIQQQSESHQKVIDFIARNFQDNHLAGLLIGKYYRAKELGLELIFDPACFVDRLPTALSHNEWISIVGNLLDNAYNASLRQPQGSKQIECLINSDGQEVIIEIADQGCGIDEALRDRIFERGVTSSASKDHGIGLWLVRSYVEQAGGSIVVENNIPFGTIFTLYIPLTRDEHHG</sequence>
<keyword id="KW-0002">3D-structure</keyword>
<keyword id="KW-0067">ATP-binding</keyword>
<keyword id="KW-0997">Cell inner membrane</keyword>
<keyword id="KW-1003">Cell membrane</keyword>
<keyword id="KW-0418">Kinase</keyword>
<keyword id="KW-0472">Membrane</keyword>
<keyword id="KW-0547">Nucleotide-binding</keyword>
<keyword id="KW-0597">Phosphoprotein</keyword>
<keyword id="KW-0808">Transferase</keyword>
<keyword id="KW-0812">Transmembrane</keyword>
<keyword id="KW-1133">Transmembrane helix</keyword>
<keyword id="KW-0902">Two-component regulatory system</keyword>
<name>CITA_KLEPN</name>